<organismHost>
    <name type="scientific">Bos taurus</name>
    <name type="common">Bovine</name>
    <dbReference type="NCBI Taxonomy" id="9913"/>
</organismHost>
<reference key="1">
    <citation type="journal article" date="1994" name="Virology">
        <title>The complete DNA sequence and the genetic organization of the short unique region (US) of the bovine herpesvirus type 1 (ST strain).</title>
        <authorList>
            <person name="Leung-Tack P."/>
            <person name="Audonnet J.F."/>
            <person name="Riviere M."/>
        </authorList>
    </citation>
    <scope>NUCLEOTIDE SEQUENCE [GENOMIC DNA]</scope>
</reference>
<accession>Q08104</accession>
<protein>
    <recommendedName>
        <fullName>Uncharacterized 16.1 kDa protein</fullName>
    </recommendedName>
    <alternativeName>
        <fullName>ORF1</fullName>
    </alternativeName>
</protein>
<proteinExistence type="predicted"/>
<sequence>MYRQGTPNRVVISTVPLSGEATATAGTGPGCEGGLGGWRLFKACRHEQEDGLYAMLPPDYFPVVPSSKPLLVKVPAPGASPDRTGGAVHFECVPAPRRPLQFFRQLYDGTFVKLPHNFPDECYEDEAPLATASTSTPTWIRNPCPWET</sequence>
<name>YOR1_BHV1S</name>
<feature type="chain" id="PRO_0000116359" description="Uncharacterized 16.1 kDa protein">
    <location>
        <begin position="1"/>
        <end position="148"/>
    </location>
</feature>
<dbReference type="EMBL" id="Z23068">
    <property type="protein sequence ID" value="CAA80608.1"/>
    <property type="molecule type" value="Genomic_DNA"/>
</dbReference>
<dbReference type="PIR" id="S35788">
    <property type="entry name" value="S35788"/>
</dbReference>
<dbReference type="InterPro" id="IPR010447">
    <property type="entry name" value="Herpes_IR6"/>
</dbReference>
<dbReference type="Pfam" id="PF06307">
    <property type="entry name" value="Herpes_IR6"/>
    <property type="match status" value="1"/>
</dbReference>
<organism>
    <name type="scientific">Bovine herpesvirus 1.2 (strain ST)</name>
    <name type="common">BoHV-1</name>
    <name type="synonym">Infectious bovine rhinotracheitis virus</name>
    <dbReference type="NCBI Taxonomy" id="45407"/>
    <lineage>
        <taxon>Viruses</taxon>
        <taxon>Duplodnaviria</taxon>
        <taxon>Heunggongvirae</taxon>
        <taxon>Peploviricota</taxon>
        <taxon>Herviviricetes</taxon>
        <taxon>Herpesvirales</taxon>
        <taxon>Orthoherpesviridae</taxon>
        <taxon>Alphaherpesvirinae</taxon>
        <taxon>Varicellovirus</taxon>
        <taxon>Varicellovirus bovinealpha1</taxon>
    </lineage>
</organism>